<comment type="function">
    <text evidence="1">Cell division protein that is required for growth during stress conditions. May be involved in protecting or stabilizing the divisomal assembly under conditions of stress.</text>
</comment>
<comment type="subcellular location">
    <subcellularLocation>
        <location evidence="1">Periplasm</location>
    </subcellularLocation>
    <text evidence="1">Localizes to the division septum.</text>
</comment>
<comment type="PTM">
    <text>Predicted to be exported by the Tat system. The position of the signal peptide cleavage has not been experimentally proven.</text>
</comment>
<comment type="similarity">
    <text evidence="1">Belongs to the FtsP family.</text>
</comment>
<keyword id="KW-0131">Cell cycle</keyword>
<keyword id="KW-0132">Cell division</keyword>
<keyword id="KW-0574">Periplasm</keyword>
<keyword id="KW-1185">Reference proteome</keyword>
<keyword id="KW-0732">Signal</keyword>
<dbReference type="EMBL" id="CP001321">
    <property type="protein sequence ID" value="ACL33543.1"/>
    <property type="molecule type" value="Genomic_DNA"/>
</dbReference>
<dbReference type="RefSeq" id="WP_015940063.1">
    <property type="nucleotide sequence ID" value="NC_011852.1"/>
</dbReference>
<dbReference type="SMR" id="B8F891"/>
<dbReference type="STRING" id="557723.HAPS_2087"/>
<dbReference type="KEGG" id="hap:HAPS_2087"/>
<dbReference type="HOGENOM" id="CLU_009100_2_4_6"/>
<dbReference type="Proteomes" id="UP000006743">
    <property type="component" value="Chromosome"/>
</dbReference>
<dbReference type="GO" id="GO:0032153">
    <property type="term" value="C:cell division site"/>
    <property type="evidence" value="ECO:0007669"/>
    <property type="project" value="UniProtKB-UniRule"/>
</dbReference>
<dbReference type="GO" id="GO:0030288">
    <property type="term" value="C:outer membrane-bounded periplasmic space"/>
    <property type="evidence" value="ECO:0007669"/>
    <property type="project" value="UniProtKB-UniRule"/>
</dbReference>
<dbReference type="GO" id="GO:0005507">
    <property type="term" value="F:copper ion binding"/>
    <property type="evidence" value="ECO:0007669"/>
    <property type="project" value="InterPro"/>
</dbReference>
<dbReference type="GO" id="GO:0016491">
    <property type="term" value="F:oxidoreductase activity"/>
    <property type="evidence" value="ECO:0007669"/>
    <property type="project" value="InterPro"/>
</dbReference>
<dbReference type="GO" id="GO:0043093">
    <property type="term" value="P:FtsZ-dependent cytokinesis"/>
    <property type="evidence" value="ECO:0007669"/>
    <property type="project" value="UniProtKB-UniRule"/>
</dbReference>
<dbReference type="CDD" id="cd04232">
    <property type="entry name" value="CuRO_1_CueO_FtsP"/>
    <property type="match status" value="1"/>
</dbReference>
<dbReference type="CDD" id="cd13867">
    <property type="entry name" value="CuRO_2_CueO_FtsP"/>
    <property type="match status" value="1"/>
</dbReference>
<dbReference type="CDD" id="cd13890">
    <property type="entry name" value="CuRO_3_CueO_FtsP"/>
    <property type="match status" value="1"/>
</dbReference>
<dbReference type="Gene3D" id="2.60.40.420">
    <property type="entry name" value="Cupredoxins - blue copper proteins"/>
    <property type="match status" value="3"/>
</dbReference>
<dbReference type="HAMAP" id="MF_00915">
    <property type="entry name" value="FtsP"/>
    <property type="match status" value="1"/>
</dbReference>
<dbReference type="InterPro" id="IPR011707">
    <property type="entry name" value="Cu-oxidase-like_N"/>
</dbReference>
<dbReference type="InterPro" id="IPR011706">
    <property type="entry name" value="Cu-oxidase_C"/>
</dbReference>
<dbReference type="InterPro" id="IPR045087">
    <property type="entry name" value="Cu-oxidase_fam"/>
</dbReference>
<dbReference type="InterPro" id="IPR008972">
    <property type="entry name" value="Cupredoxin"/>
</dbReference>
<dbReference type="InterPro" id="IPR026589">
    <property type="entry name" value="FtsP"/>
</dbReference>
<dbReference type="InterPro" id="IPR006311">
    <property type="entry name" value="TAT_signal"/>
</dbReference>
<dbReference type="InterPro" id="IPR019546">
    <property type="entry name" value="TAT_signal_bac_arc"/>
</dbReference>
<dbReference type="NCBIfam" id="TIGR01409">
    <property type="entry name" value="TAT_signal_seq"/>
    <property type="match status" value="1"/>
</dbReference>
<dbReference type="PANTHER" id="PTHR48267:SF1">
    <property type="entry name" value="BILIRUBIN OXIDASE"/>
    <property type="match status" value="1"/>
</dbReference>
<dbReference type="PANTHER" id="PTHR48267">
    <property type="entry name" value="CUPREDOXIN SUPERFAMILY PROTEIN"/>
    <property type="match status" value="1"/>
</dbReference>
<dbReference type="Pfam" id="PF07731">
    <property type="entry name" value="Cu-oxidase_2"/>
    <property type="match status" value="1"/>
</dbReference>
<dbReference type="Pfam" id="PF07732">
    <property type="entry name" value="Cu-oxidase_3"/>
    <property type="match status" value="1"/>
</dbReference>
<dbReference type="SUPFAM" id="SSF49503">
    <property type="entry name" value="Cupredoxins"/>
    <property type="match status" value="3"/>
</dbReference>
<dbReference type="PROSITE" id="PS51318">
    <property type="entry name" value="TAT"/>
    <property type="match status" value="1"/>
</dbReference>
<proteinExistence type="inferred from homology"/>
<evidence type="ECO:0000255" key="1">
    <source>
        <dbReference type="HAMAP-Rule" id="MF_00915"/>
    </source>
</evidence>
<reference key="1">
    <citation type="journal article" date="2009" name="J. Bacteriol.">
        <title>Complete genome sequence of Haemophilus parasuis SH0165.</title>
        <authorList>
            <person name="Yue M."/>
            <person name="Yang F."/>
            <person name="Yang J."/>
            <person name="Bei W."/>
            <person name="Cai X."/>
            <person name="Chen L."/>
            <person name="Dong J."/>
            <person name="Zhou R."/>
            <person name="Jin M."/>
            <person name="Jin Q."/>
            <person name="Chen H."/>
        </authorList>
    </citation>
    <scope>NUCLEOTIDE SEQUENCE [LARGE SCALE GENOMIC DNA]</scope>
    <source>
        <strain>SH0165</strain>
    </source>
</reference>
<gene>
    <name evidence="1" type="primary">ftsP</name>
    <name type="ordered locus">HAPS_2087</name>
</gene>
<protein>
    <recommendedName>
        <fullName evidence="1">Cell division protein FtsP</fullName>
    </recommendedName>
</protein>
<name>FTSP_GLAP5</name>
<accession>B8F891</accession>
<sequence>MKLSRRQFLQRSTLAGVATVTPTSLWAKNRPSLTIPPMIEVGRGRPVRLDFRPAQTQFNKGKLVDVWGVNGRYLAPTVRVKSGDFVKLTYTNNLPQALSINIQGLQAPTEMIGSIHRAIDKNSSWSPILSVNQSACTAWYHADTMLNSAFQVYRGLAGLWIIEDSESRKASLPNKYGVNDIPLILQDQLINSDGIQVIDTQTNQFFGKRLFVNGQESPYFDVPRGWVRLRIANASLSRHYDLRLDNGKPLYLIATGIGFLADMVEMEHISLAPSERIEVLVDLNEGDKVSLITGKKRDFFDEIGKLFKDNNELNDNVVLEFRPEGLPSALNVTPKLPPFNVEEFNLKITQERKINLRPQDRLINHQRFDPKRIDFTVKKGTVERWYLTTTEEVGFTLQGAKFMVETRNRQAVPHKQLAWRDCVWLEPTQETTLLVKFEHTASEQQPFTFGVSDLMLRDRGCMGQFVVAE</sequence>
<organism>
    <name type="scientific">Glaesserella parasuis serovar 5 (strain SH0165)</name>
    <name type="common">Haemophilus parasuis</name>
    <dbReference type="NCBI Taxonomy" id="557723"/>
    <lineage>
        <taxon>Bacteria</taxon>
        <taxon>Pseudomonadati</taxon>
        <taxon>Pseudomonadota</taxon>
        <taxon>Gammaproteobacteria</taxon>
        <taxon>Pasteurellales</taxon>
        <taxon>Pasteurellaceae</taxon>
        <taxon>Glaesserella</taxon>
    </lineage>
</organism>
<feature type="signal peptide" description="Tat-type signal" evidence="1">
    <location>
        <begin position="1"/>
        <end position="27"/>
    </location>
</feature>
<feature type="chain" id="PRO_0000416010" description="Cell division protein FtsP">
    <location>
        <begin position="28"/>
        <end position="469"/>
    </location>
</feature>